<sequence>MRSIAGLHKLKMEIFNVEELINMKPFKNMNKITINQNDNCILANRCFVKIDTPRYIPSTSISSSNIIRIRNHDFTLSELLYSPFHFQQPQFQYLLPGFVLTCIDKVSKQQKECKYCISNRGDDDSLSINLFIPTINKSIYIIIGLRMKNFWKPKFEIE</sequence>
<reference key="1">
    <citation type="journal article" date="1990" name="Virology">
        <title>The complete DNA sequence of vaccinia virus.</title>
        <authorList>
            <person name="Goebel S.J."/>
            <person name="Johnson G.P."/>
            <person name="Perkus M.E."/>
            <person name="Davis S.W."/>
            <person name="Winslow J.P."/>
            <person name="Paoletti E."/>
        </authorList>
    </citation>
    <scope>NUCLEOTIDE SEQUENCE [LARGE SCALE GENOMIC DNA]</scope>
</reference>
<reference key="2">
    <citation type="journal article" date="1990" name="Virology">
        <title>Appendix to 'The complete DNA sequence of vaccinia virus'.</title>
        <authorList>
            <person name="Goebel S.J."/>
            <person name="Johnson G.P."/>
            <person name="Perkus M.E."/>
            <person name="Davis S.W."/>
            <person name="Winslow J.P."/>
            <person name="Paoletti E."/>
        </authorList>
    </citation>
    <scope>NUCLEOTIDE SEQUENCE [LARGE SCALE GENOMIC DNA]</scope>
</reference>
<organismHost>
    <name type="scientific">Homo sapiens</name>
    <name type="common">Human</name>
    <dbReference type="NCBI Taxonomy" id="9606"/>
</organismHost>
<proteinExistence type="inferred from homology"/>
<feature type="chain" id="PRO_0000099511" description="Protein OPG060">
    <location>
        <begin position="1"/>
        <end position="158"/>
    </location>
</feature>
<accession>P21020</accession>
<evidence type="ECO:0000250" key="1">
    <source>
        <dbReference type="UniProtKB" id="Q80HX4"/>
    </source>
</evidence>
<evidence type="ECO:0000305" key="2"/>
<gene>
    <name type="primary">OPG060</name>
    <name type="ORF">F15L</name>
</gene>
<comment type="induction">
    <text evidence="1">Expressed in the early phase of the viral replicative cycle.</text>
</comment>
<comment type="similarity">
    <text evidence="2">Belongs to the orthopoxvirus OPG058 family.</text>
</comment>
<name>PG060_VACCC</name>
<organism>
    <name type="scientific">Vaccinia virus (strain Copenhagen)</name>
    <name type="common">VACV</name>
    <dbReference type="NCBI Taxonomy" id="10249"/>
    <lineage>
        <taxon>Viruses</taxon>
        <taxon>Varidnaviria</taxon>
        <taxon>Bamfordvirae</taxon>
        <taxon>Nucleocytoviricota</taxon>
        <taxon>Pokkesviricetes</taxon>
        <taxon>Chitovirales</taxon>
        <taxon>Poxviridae</taxon>
        <taxon>Chordopoxvirinae</taxon>
        <taxon>Orthopoxvirus</taxon>
        <taxon>Vaccinia virus</taxon>
    </lineage>
</organism>
<keyword id="KW-0244">Early protein</keyword>
<keyword id="KW-1185">Reference proteome</keyword>
<protein>
    <recommendedName>
        <fullName>Protein OPG060</fullName>
    </recommendedName>
    <alternativeName>
        <fullName>Protein F15</fullName>
    </alternativeName>
</protein>
<dbReference type="EMBL" id="M35027">
    <property type="protein sequence ID" value="AAA48034.1"/>
    <property type="molecule type" value="Genomic_DNA"/>
</dbReference>
<dbReference type="PIR" id="B42508">
    <property type="entry name" value="B42508"/>
</dbReference>
<dbReference type="DIP" id="DIP-2191N"/>
<dbReference type="IntAct" id="P21020">
    <property type="interactions" value="1"/>
</dbReference>
<dbReference type="MINT" id="P21020"/>
<dbReference type="Proteomes" id="UP000008269">
    <property type="component" value="Segment"/>
</dbReference>
<dbReference type="InterPro" id="IPR007675">
    <property type="entry name" value="Poxvirus_F15"/>
</dbReference>
<dbReference type="Pfam" id="PF04596">
    <property type="entry name" value="Pox_F15"/>
    <property type="match status" value="1"/>
</dbReference>
<dbReference type="PIRSF" id="PIRSF015694">
    <property type="entry name" value="VAC_F15L"/>
    <property type="match status" value="1"/>
</dbReference>